<evidence type="ECO:0000255" key="1">
    <source>
        <dbReference type="HAMAP-Rule" id="MF_00095"/>
    </source>
</evidence>
<sequence>MRFDPPLEEGRLLRRYKRFLADIESAGGERLTIHCPNTGSMLNCMSEGCRVWFSRSDDPRRKLPGTWELSETPQGRLACVNTARANRLVEEALLAGDIPELAGFASLRREVAYGVENSRADFRLEYPAGALFIEVKSVTLGFDETAVAAFPDAVTLRGAKHLRELAALARDGVRAVQLYCVNLSGIEAVRPADEIDPAYGKALREAAQAGVEVLAYGAEVTTEGLRLARRLPVRL</sequence>
<organism>
    <name type="scientific">Pseudomonas paraeruginosa (strain DSM 24068 / PA7)</name>
    <name type="common">Pseudomonas aeruginosa (strain PA7)</name>
    <dbReference type="NCBI Taxonomy" id="381754"/>
    <lineage>
        <taxon>Bacteria</taxon>
        <taxon>Pseudomonadati</taxon>
        <taxon>Pseudomonadota</taxon>
        <taxon>Gammaproteobacteria</taxon>
        <taxon>Pseudomonadales</taxon>
        <taxon>Pseudomonadaceae</taxon>
        <taxon>Pseudomonas</taxon>
        <taxon>Pseudomonas paraeruginosa</taxon>
    </lineage>
</organism>
<comment type="similarity">
    <text evidence="1">Belongs to the SfsA family.</text>
</comment>
<accession>A6VCH6</accession>
<protein>
    <recommendedName>
        <fullName evidence="1">Sugar fermentation stimulation protein homolog</fullName>
    </recommendedName>
</protein>
<dbReference type="EMBL" id="CP000744">
    <property type="protein sequence ID" value="ABR83717.1"/>
    <property type="molecule type" value="Genomic_DNA"/>
</dbReference>
<dbReference type="RefSeq" id="WP_012077475.1">
    <property type="nucleotide sequence ID" value="NC_009656.1"/>
</dbReference>
<dbReference type="SMR" id="A6VCH6"/>
<dbReference type="KEGG" id="pap:PSPA7_5437"/>
<dbReference type="HOGENOM" id="CLU_052299_2_0_6"/>
<dbReference type="Proteomes" id="UP000001582">
    <property type="component" value="Chromosome"/>
</dbReference>
<dbReference type="GO" id="GO:0003677">
    <property type="term" value="F:DNA binding"/>
    <property type="evidence" value="ECO:0007669"/>
    <property type="project" value="InterPro"/>
</dbReference>
<dbReference type="CDD" id="cd22359">
    <property type="entry name" value="SfsA-like_bacterial"/>
    <property type="match status" value="1"/>
</dbReference>
<dbReference type="FunFam" id="2.40.50.580:FF:000001">
    <property type="entry name" value="Sugar fermentation stimulation protein A"/>
    <property type="match status" value="1"/>
</dbReference>
<dbReference type="FunFam" id="3.40.1350.60:FF:000001">
    <property type="entry name" value="Sugar fermentation stimulation protein A"/>
    <property type="match status" value="1"/>
</dbReference>
<dbReference type="Gene3D" id="2.40.50.580">
    <property type="match status" value="1"/>
</dbReference>
<dbReference type="Gene3D" id="3.40.1350.60">
    <property type="match status" value="1"/>
</dbReference>
<dbReference type="HAMAP" id="MF_00095">
    <property type="entry name" value="SfsA"/>
    <property type="match status" value="1"/>
</dbReference>
<dbReference type="InterPro" id="IPR005224">
    <property type="entry name" value="SfsA"/>
</dbReference>
<dbReference type="InterPro" id="IPR040452">
    <property type="entry name" value="SfsA_C"/>
</dbReference>
<dbReference type="InterPro" id="IPR041465">
    <property type="entry name" value="SfsA_N"/>
</dbReference>
<dbReference type="NCBIfam" id="TIGR00230">
    <property type="entry name" value="sfsA"/>
    <property type="match status" value="1"/>
</dbReference>
<dbReference type="PANTHER" id="PTHR30545">
    <property type="entry name" value="SUGAR FERMENTATION STIMULATION PROTEIN A"/>
    <property type="match status" value="1"/>
</dbReference>
<dbReference type="PANTHER" id="PTHR30545:SF2">
    <property type="entry name" value="SUGAR FERMENTATION STIMULATION PROTEIN A"/>
    <property type="match status" value="1"/>
</dbReference>
<dbReference type="Pfam" id="PF03749">
    <property type="entry name" value="SfsA"/>
    <property type="match status" value="1"/>
</dbReference>
<dbReference type="Pfam" id="PF17746">
    <property type="entry name" value="SfsA_N"/>
    <property type="match status" value="1"/>
</dbReference>
<reference key="1">
    <citation type="submission" date="2007-06" db="EMBL/GenBank/DDBJ databases">
        <authorList>
            <person name="Dodson R.J."/>
            <person name="Harkins D."/>
            <person name="Paulsen I.T."/>
        </authorList>
    </citation>
    <scope>NUCLEOTIDE SEQUENCE [LARGE SCALE GENOMIC DNA]</scope>
    <source>
        <strain>DSM 24068 / PA7</strain>
    </source>
</reference>
<gene>
    <name evidence="1" type="primary">sfsA</name>
    <name type="ordered locus">PSPA7_5437</name>
</gene>
<name>SFSA_PSEP7</name>
<feature type="chain" id="PRO_1000008008" description="Sugar fermentation stimulation protein homolog">
    <location>
        <begin position="1"/>
        <end position="235"/>
    </location>
</feature>
<proteinExistence type="inferred from homology"/>